<evidence type="ECO:0000255" key="1">
    <source>
        <dbReference type="PROSITE-ProRule" id="PRU00146"/>
    </source>
</evidence>
<evidence type="ECO:0000256" key="2">
    <source>
        <dbReference type="SAM" id="MobiDB-lite"/>
    </source>
</evidence>
<evidence type="ECO:0000269" key="3">
    <source>
    </source>
</evidence>
<evidence type="ECO:0000269" key="4">
    <source>
    </source>
</evidence>
<evidence type="ECO:0000269" key="5">
    <source>
    </source>
</evidence>
<evidence type="ECO:0000269" key="6">
    <source>
    </source>
</evidence>
<evidence type="ECO:0000269" key="7">
    <source>
    </source>
</evidence>
<evidence type="ECO:0000269" key="8">
    <source>
    </source>
</evidence>
<evidence type="ECO:0000305" key="9"/>
<evidence type="ECO:0000312" key="10">
    <source>
        <dbReference type="EMBL" id="AAL68389.1"/>
    </source>
</evidence>
<evidence type="ECO:0007829" key="11">
    <source>
        <dbReference type="PDB" id="2XK0"/>
    </source>
</evidence>
<evidence type="ECO:0007829" key="12">
    <source>
        <dbReference type="PDB" id="5OQD"/>
    </source>
</evidence>
<protein>
    <recommendedName>
        <fullName>Polycomb protein Pcl</fullName>
    </recommendedName>
    <alternativeName>
        <fullName>Polycomblike protein</fullName>
    </alternativeName>
</protein>
<reference evidence="9" key="1">
    <citation type="journal article" date="1994" name="Development">
        <title>Molecular characterisation of the Polycomblike gene of Drosophila melanogaster, a trans-acting negative regulator of homeotic gene expression.</title>
        <authorList>
            <person name="Lonie A."/>
            <person name="D'andrea R."/>
            <person name="Paro R."/>
            <person name="Saint R."/>
        </authorList>
    </citation>
    <scope>NUCLEOTIDE SEQUENCE [MRNA]</scope>
    <scope>FUNCTION</scope>
    <scope>SUBCELLULAR LOCATION</scope>
    <scope>DEVELOPMENTAL STAGE</scope>
    <source>
        <tissue evidence="8">Embryo</tissue>
    </source>
</reference>
<reference evidence="9" key="2">
    <citation type="journal article" date="2000" name="Science">
        <title>The genome sequence of Drosophila melanogaster.</title>
        <authorList>
            <person name="Adams M.D."/>
            <person name="Celniker S.E."/>
            <person name="Holt R.A."/>
            <person name="Evans C.A."/>
            <person name="Gocayne J.D."/>
            <person name="Amanatides P.G."/>
            <person name="Scherer S.E."/>
            <person name="Li P.W."/>
            <person name="Hoskins R.A."/>
            <person name="Galle R.F."/>
            <person name="George R.A."/>
            <person name="Lewis S.E."/>
            <person name="Richards S."/>
            <person name="Ashburner M."/>
            <person name="Henderson S.N."/>
            <person name="Sutton G.G."/>
            <person name="Wortman J.R."/>
            <person name="Yandell M.D."/>
            <person name="Zhang Q."/>
            <person name="Chen L.X."/>
            <person name="Brandon R.C."/>
            <person name="Rogers Y.-H.C."/>
            <person name="Blazej R.G."/>
            <person name="Champe M."/>
            <person name="Pfeiffer B.D."/>
            <person name="Wan K.H."/>
            <person name="Doyle C."/>
            <person name="Baxter E.G."/>
            <person name="Helt G."/>
            <person name="Nelson C.R."/>
            <person name="Miklos G.L.G."/>
            <person name="Abril J.F."/>
            <person name="Agbayani A."/>
            <person name="An H.-J."/>
            <person name="Andrews-Pfannkoch C."/>
            <person name="Baldwin D."/>
            <person name="Ballew R.M."/>
            <person name="Basu A."/>
            <person name="Baxendale J."/>
            <person name="Bayraktaroglu L."/>
            <person name="Beasley E.M."/>
            <person name="Beeson K.Y."/>
            <person name="Benos P.V."/>
            <person name="Berman B.P."/>
            <person name="Bhandari D."/>
            <person name="Bolshakov S."/>
            <person name="Borkova D."/>
            <person name="Botchan M.R."/>
            <person name="Bouck J."/>
            <person name="Brokstein P."/>
            <person name="Brottier P."/>
            <person name="Burtis K.C."/>
            <person name="Busam D.A."/>
            <person name="Butler H."/>
            <person name="Cadieu E."/>
            <person name="Center A."/>
            <person name="Chandra I."/>
            <person name="Cherry J.M."/>
            <person name="Cawley S."/>
            <person name="Dahlke C."/>
            <person name="Davenport L.B."/>
            <person name="Davies P."/>
            <person name="de Pablos B."/>
            <person name="Delcher A."/>
            <person name="Deng Z."/>
            <person name="Mays A.D."/>
            <person name="Dew I."/>
            <person name="Dietz S.M."/>
            <person name="Dodson K."/>
            <person name="Doup L.E."/>
            <person name="Downes M."/>
            <person name="Dugan-Rocha S."/>
            <person name="Dunkov B.C."/>
            <person name="Dunn P."/>
            <person name="Durbin K.J."/>
            <person name="Evangelista C.C."/>
            <person name="Ferraz C."/>
            <person name="Ferriera S."/>
            <person name="Fleischmann W."/>
            <person name="Fosler C."/>
            <person name="Gabrielian A.E."/>
            <person name="Garg N.S."/>
            <person name="Gelbart W.M."/>
            <person name="Glasser K."/>
            <person name="Glodek A."/>
            <person name="Gong F."/>
            <person name="Gorrell J.H."/>
            <person name="Gu Z."/>
            <person name="Guan P."/>
            <person name="Harris M."/>
            <person name="Harris N.L."/>
            <person name="Harvey D.A."/>
            <person name="Heiman T.J."/>
            <person name="Hernandez J.R."/>
            <person name="Houck J."/>
            <person name="Hostin D."/>
            <person name="Houston K.A."/>
            <person name="Howland T.J."/>
            <person name="Wei M.-H."/>
            <person name="Ibegwam C."/>
            <person name="Jalali M."/>
            <person name="Kalush F."/>
            <person name="Karpen G.H."/>
            <person name="Ke Z."/>
            <person name="Kennison J.A."/>
            <person name="Ketchum K.A."/>
            <person name="Kimmel B.E."/>
            <person name="Kodira C.D."/>
            <person name="Kraft C.L."/>
            <person name="Kravitz S."/>
            <person name="Kulp D."/>
            <person name="Lai Z."/>
            <person name="Lasko P."/>
            <person name="Lei Y."/>
            <person name="Levitsky A.A."/>
            <person name="Li J.H."/>
            <person name="Li Z."/>
            <person name="Liang Y."/>
            <person name="Lin X."/>
            <person name="Liu X."/>
            <person name="Mattei B."/>
            <person name="McIntosh T.C."/>
            <person name="McLeod M.P."/>
            <person name="McPherson D."/>
            <person name="Merkulov G."/>
            <person name="Milshina N.V."/>
            <person name="Mobarry C."/>
            <person name="Morris J."/>
            <person name="Moshrefi A."/>
            <person name="Mount S.M."/>
            <person name="Moy M."/>
            <person name="Murphy B."/>
            <person name="Murphy L."/>
            <person name="Muzny D.M."/>
            <person name="Nelson D.L."/>
            <person name="Nelson D.R."/>
            <person name="Nelson K.A."/>
            <person name="Nixon K."/>
            <person name="Nusskern D.R."/>
            <person name="Pacleb J.M."/>
            <person name="Palazzolo M."/>
            <person name="Pittman G.S."/>
            <person name="Pan S."/>
            <person name="Pollard J."/>
            <person name="Puri V."/>
            <person name="Reese M.G."/>
            <person name="Reinert K."/>
            <person name="Remington K."/>
            <person name="Saunders R.D.C."/>
            <person name="Scheeler F."/>
            <person name="Shen H."/>
            <person name="Shue B.C."/>
            <person name="Siden-Kiamos I."/>
            <person name="Simpson M."/>
            <person name="Skupski M.P."/>
            <person name="Smith T.J."/>
            <person name="Spier E."/>
            <person name="Spradling A.C."/>
            <person name="Stapleton M."/>
            <person name="Strong R."/>
            <person name="Sun E."/>
            <person name="Svirskas R."/>
            <person name="Tector C."/>
            <person name="Turner R."/>
            <person name="Venter E."/>
            <person name="Wang A.H."/>
            <person name="Wang X."/>
            <person name="Wang Z.-Y."/>
            <person name="Wassarman D.A."/>
            <person name="Weinstock G.M."/>
            <person name="Weissenbach J."/>
            <person name="Williams S.M."/>
            <person name="Woodage T."/>
            <person name="Worley K.C."/>
            <person name="Wu D."/>
            <person name="Yang S."/>
            <person name="Yao Q.A."/>
            <person name="Ye J."/>
            <person name="Yeh R.-F."/>
            <person name="Zaveri J.S."/>
            <person name="Zhan M."/>
            <person name="Zhang G."/>
            <person name="Zhao Q."/>
            <person name="Zheng L."/>
            <person name="Zheng X.H."/>
            <person name="Zhong F.N."/>
            <person name="Zhong W."/>
            <person name="Zhou X."/>
            <person name="Zhu S.C."/>
            <person name="Zhu X."/>
            <person name="Smith H.O."/>
            <person name="Gibbs R.A."/>
            <person name="Myers E.W."/>
            <person name="Rubin G.M."/>
            <person name="Venter J.C."/>
        </authorList>
    </citation>
    <scope>NUCLEOTIDE SEQUENCE [LARGE SCALE GENOMIC DNA]</scope>
    <source>
        <strain evidence="3">Berkeley</strain>
    </source>
</reference>
<reference evidence="9" key="3">
    <citation type="journal article" date="2002" name="Genome Biol.">
        <title>Annotation of the Drosophila melanogaster euchromatic genome: a systematic review.</title>
        <authorList>
            <person name="Misra S."/>
            <person name="Crosby M.A."/>
            <person name="Mungall C.J."/>
            <person name="Matthews B.B."/>
            <person name="Campbell K.S."/>
            <person name="Hradecky P."/>
            <person name="Huang Y."/>
            <person name="Kaminker J.S."/>
            <person name="Millburn G.H."/>
            <person name="Prochnik S.E."/>
            <person name="Smith C.D."/>
            <person name="Tupy J.L."/>
            <person name="Whitfield E.J."/>
            <person name="Bayraktaroglu L."/>
            <person name="Berman B.P."/>
            <person name="Bettencourt B.R."/>
            <person name="Celniker S.E."/>
            <person name="de Grey A.D.N.J."/>
            <person name="Drysdale R.A."/>
            <person name="Harris N.L."/>
            <person name="Richter J."/>
            <person name="Russo S."/>
            <person name="Schroeder A.J."/>
            <person name="Shu S.Q."/>
            <person name="Stapleton M."/>
            <person name="Yamada C."/>
            <person name="Ashburner M."/>
            <person name="Gelbart W.M."/>
            <person name="Rubin G.M."/>
            <person name="Lewis S.E."/>
        </authorList>
    </citation>
    <scope>GENOME REANNOTATION</scope>
    <source>
        <strain>Berkeley</strain>
    </source>
</reference>
<reference evidence="9" key="4">
    <citation type="journal article" date="2002" name="Genome Biol.">
        <title>A Drosophila full-length cDNA resource.</title>
        <authorList>
            <person name="Stapleton M."/>
            <person name="Carlson J.W."/>
            <person name="Brokstein P."/>
            <person name="Yu C."/>
            <person name="Champe M."/>
            <person name="George R.A."/>
            <person name="Guarin H."/>
            <person name="Kronmiller B."/>
            <person name="Pacleb J.M."/>
            <person name="Park S."/>
            <person name="Wan K.H."/>
            <person name="Rubin G.M."/>
            <person name="Celniker S.E."/>
        </authorList>
    </citation>
    <scope>NUCLEOTIDE SEQUENCE [LARGE SCALE MRNA]</scope>
    <source>
        <strain evidence="5">Berkeley</strain>
        <tissue evidence="5">Embryo</tissue>
    </source>
</reference>
<reference key="5">
    <citation type="journal article" date="2001" name="J. Biol. Chem.">
        <title>Polycomblike PHD fingers mediate conserved interaction with enhancer of zeste protein.</title>
        <authorList>
            <person name="O'Connell S."/>
            <person name="Wang L."/>
            <person name="Robert S."/>
            <person name="Jones C.A."/>
            <person name="Saint R."/>
            <person name="Jones R.S."/>
        </authorList>
    </citation>
    <scope>INTERACTION WITH E(Z)</scope>
    <scope>MUTAGENESIS OF CYS-517 AND 527-MET--CYS-530</scope>
</reference>
<reference key="6">
    <citation type="journal article" date="2003" name="Mol. Cell. Biol.">
        <title>A 1-megadalton ESC/E(Z) complex from Drosophila that contains polycomblike and RPD3.</title>
        <authorList>
            <person name="Tie F."/>
            <person name="Prasad-Sinha J."/>
            <person name="Birve A."/>
            <person name="Rasmuson-Lestander A."/>
            <person name="Harte P.J."/>
        </authorList>
    </citation>
    <scope>IDENTIFICATION IN AN ESC/E(Z) COMPLEX WITH CAF1-55; ESC; E(Z); SU(Z)12 AND HDAC1</scope>
</reference>
<reference key="7">
    <citation type="journal article" date="2008" name="J. Proteome Res.">
        <title>Phosphoproteome analysis of Drosophila melanogaster embryos.</title>
        <authorList>
            <person name="Zhai B."/>
            <person name="Villen J."/>
            <person name="Beausoleil S.A."/>
            <person name="Mintseris J."/>
            <person name="Gygi S.P."/>
        </authorList>
    </citation>
    <scope>PHOSPHORYLATION [LARGE SCALE ANALYSIS] AT SER-805 AND SER-806</scope>
    <scope>IDENTIFICATION BY MASS SPECTROMETRY</scope>
    <source>
        <tissue>Embryo</tissue>
    </source>
</reference>
<reference key="8">
    <citation type="journal article" date="2012" name="Nat. Struct. Mol. Biol.">
        <title>Phf19 links methylated Lys36 of histone H3 to regulation of Polycomb activity.</title>
        <authorList>
            <person name="Ballare C."/>
            <person name="Lange M."/>
            <person name="Lapinaite A."/>
            <person name="Martin G.M."/>
            <person name="Morey L."/>
            <person name="Pascual G."/>
            <person name="Liefke R."/>
            <person name="Simon B."/>
            <person name="Shi Y."/>
            <person name="Gozani O."/>
            <person name="Carlomagno T."/>
            <person name="Benitah S.A."/>
            <person name="Di Croce L."/>
        </authorList>
    </citation>
    <scope>DOMAIN</scope>
</reference>
<reference key="9">
    <citation type="journal article" date="2012" name="Nat. Struct. Mol. Biol.">
        <title>Molecular basis for H3K36me3 recognition by the Tudor domain of PHF1.</title>
        <authorList>
            <person name="Musselman C.A."/>
            <person name="Avvakumov N."/>
            <person name="Watanabe R."/>
            <person name="Abraham C.G."/>
            <person name="Lalonde M.E."/>
            <person name="Hong Z."/>
            <person name="Allen C."/>
            <person name="Roy S."/>
            <person name="Nunez J.K."/>
            <person name="Nickoloff J."/>
            <person name="Kulesza C.A."/>
            <person name="Yasui A."/>
            <person name="Cote J."/>
            <person name="Kutateladze T.G."/>
        </authorList>
    </citation>
    <scope>DOMAIN</scope>
</reference>
<accession>Q24459</accession>
<accession>Q8T8P9</accession>
<accession>Q9V8C2</accession>
<gene>
    <name type="primary">Pcl</name>
    <name type="ORF">CG5109</name>
</gene>
<name>PCL_DROME</name>
<comment type="function">
    <text evidence="8">Polycomb group (PcG) protein. While PcG proteins are generally required to maintain the transcriptionally repressive state of homeotic genes throughout development, this protein is specifically required during the first 6 hours of embryogenesis to establish the repressed state. Component of the Esc/E(z) complex, which methylates 'Lys-9' and 'Lys-27' residues of histone H3, leading to transcriptional repression of the affected target gene. The Esc/E(z) complex is necessary but not sufficient for the repression of homeotic target genes, suggesting that the recruitment of the distinct PRC1 complex is also required. Required for the correct spatial expression of the homeotic genes of the Antennapedia and Bithorax complexes.</text>
</comment>
<comment type="subunit">
    <text evidence="4 6">Component of a form of the Esc/E(z) complex present specifically during early embryogenesis which is composed of Caf1-55, esc, E(z), Su(z)12, Pcl and HDAC1/Rpd3. This complex is distinct from the PRC1 complex, which contains many other PcG proteins like Pc, Ph, Psc, Su(z)2. The two complexes however cooperate and interact together during the first 3 hours of development to establish PcG silencing. Interacts with corto in vitro.</text>
</comment>
<comment type="interaction">
    <interactant intactId="EBI-430086">
        <id>Q24459</id>
    </interactant>
    <interactant intactId="EBI-112315">
        <id>P42124</id>
        <label>E(z)</label>
    </interactant>
    <organismsDiffer>false</organismsDiffer>
    <experiments>15</experiments>
</comment>
<comment type="interaction">
    <interactant intactId="EBI-430086">
        <id>Q24459</id>
    </interactant>
    <interactant intactId="EBI-302197">
        <id>Q94517</id>
        <label>HDAC1</label>
    </interactant>
    <organismsDiffer>false</organismsDiffer>
    <experiments>5</experiments>
</comment>
<comment type="subcellular location">
    <subcellularLocation>
        <location evidence="8">Nucleus</location>
    </subcellularLocation>
    <subcellularLocation>
        <location evidence="8">Chromosome</location>
    </subcellularLocation>
    <text>Associated with chromatin. Colocalizes with many PcG sites on polytene chromosomes. It also associates with many unique sites on polytene chromosomes.</text>
</comment>
<comment type="developmental stage">
    <text evidence="8">Ubiquitous expression in embryos.</text>
</comment>
<comment type="domain">
    <text>The PHD-type zinc fingers mediate the interaction with E(z).</text>
</comment>
<comment type="domain">
    <text>In contrast to vertebrate homologs (PHF1, PHF19 and MTF2), the Tudor domain does not bind H3K36me3 (PubMed:23104054, PubMed:23142980).</text>
</comment>
<comment type="similarity">
    <text evidence="9">Belongs to the Polycomblike family.</text>
</comment>
<comment type="sequence caution" evidence="9">
    <conflict type="frameshift">
        <sequence resource="EMBL-CDS" id="AAA64457"/>
    </conflict>
</comment>
<feature type="chain" id="PRO_0000059339" description="Polycomb protein Pcl">
    <location>
        <begin position="1"/>
        <end position="1043"/>
    </location>
</feature>
<feature type="domain" description="Tudor">
    <location>
        <begin position="349"/>
        <end position="404"/>
    </location>
</feature>
<feature type="zinc finger region" description="PHD-type 1" evidence="1 9">
    <location>
        <begin position="424"/>
        <end position="472"/>
    </location>
</feature>
<feature type="zinc finger region" description="PHD-type 2" evidence="1 9">
    <location>
        <begin position="512"/>
        <end position="560"/>
    </location>
</feature>
<feature type="region of interest" description="Disordered" evidence="2">
    <location>
        <begin position="1"/>
        <end position="34"/>
    </location>
</feature>
<feature type="region of interest" description="Disordered" evidence="2">
    <location>
        <begin position="271"/>
        <end position="302"/>
    </location>
</feature>
<feature type="region of interest" description="Disordered" evidence="2">
    <location>
        <begin position="317"/>
        <end position="346"/>
    </location>
</feature>
<feature type="region of interest" description="Disordered" evidence="2">
    <location>
        <begin position="395"/>
        <end position="422"/>
    </location>
</feature>
<feature type="region of interest" description="Disordered" evidence="2">
    <location>
        <begin position="737"/>
        <end position="819"/>
    </location>
</feature>
<feature type="region of interest" description="Disordered" evidence="2">
    <location>
        <begin position="931"/>
        <end position="985"/>
    </location>
</feature>
<feature type="compositionally biased region" description="Low complexity" evidence="2">
    <location>
        <begin position="25"/>
        <end position="34"/>
    </location>
</feature>
<feature type="compositionally biased region" description="Pro residues" evidence="2">
    <location>
        <begin position="324"/>
        <end position="344"/>
    </location>
</feature>
<feature type="compositionally biased region" description="Gly residues" evidence="2">
    <location>
        <begin position="399"/>
        <end position="412"/>
    </location>
</feature>
<feature type="compositionally biased region" description="Basic and acidic residues" evidence="2">
    <location>
        <begin position="737"/>
        <end position="757"/>
    </location>
</feature>
<feature type="compositionally biased region" description="Basic residues" evidence="2">
    <location>
        <begin position="783"/>
        <end position="792"/>
    </location>
</feature>
<feature type="compositionally biased region" description="Basic and acidic residues" evidence="2">
    <location>
        <begin position="793"/>
        <end position="804"/>
    </location>
</feature>
<feature type="compositionally biased region" description="Low complexity" evidence="2">
    <location>
        <begin position="807"/>
        <end position="819"/>
    </location>
</feature>
<feature type="compositionally biased region" description="Basic residues" evidence="2">
    <location>
        <begin position="945"/>
        <end position="954"/>
    </location>
</feature>
<feature type="compositionally biased region" description="Low complexity" evidence="2">
    <location>
        <begin position="955"/>
        <end position="977"/>
    </location>
</feature>
<feature type="modified residue" description="Phosphoserine" evidence="7">
    <location>
        <position position="805"/>
    </location>
</feature>
<feature type="modified residue" description="Phosphoserine" evidence="7">
    <location>
        <position position="806"/>
    </location>
</feature>
<feature type="mutagenesis site" description="Abolishes interaction with E(z)." evidence="4">
    <original>C</original>
    <variation>S</variation>
    <variation>A</variation>
    <location>
        <position position="517"/>
    </location>
</feature>
<feature type="mutagenesis site" description="Abolishes interaction with E(z)." evidence="4">
    <original>MLQC</original>
    <variation>QQQA</variation>
    <location>
        <begin position="527"/>
        <end position="530"/>
    </location>
</feature>
<feature type="sequence conflict" description="In Ref. 1; AAA64457." evidence="9" ref="1">
    <original>S</original>
    <variation>N</variation>
    <location>
        <position position="93"/>
    </location>
</feature>
<feature type="strand" evidence="11">
    <location>
        <begin position="341"/>
        <end position="345"/>
    </location>
</feature>
<feature type="strand" evidence="11">
    <location>
        <begin position="356"/>
        <end position="360"/>
    </location>
</feature>
<feature type="strand" evidence="11">
    <location>
        <begin position="366"/>
        <end position="374"/>
    </location>
</feature>
<feature type="strand" evidence="11">
    <location>
        <begin position="379"/>
        <end position="383"/>
    </location>
</feature>
<feature type="strand" evidence="11">
    <location>
        <begin position="388"/>
        <end position="391"/>
    </location>
</feature>
<feature type="turn" evidence="11">
    <location>
        <begin position="393"/>
        <end position="395"/>
    </location>
</feature>
<feature type="turn" evidence="12">
    <location>
        <begin position="502"/>
        <end position="504"/>
    </location>
</feature>
<feature type="strand" evidence="12">
    <location>
        <begin position="508"/>
        <end position="511"/>
    </location>
</feature>
<feature type="turn" evidence="12">
    <location>
        <begin position="523"/>
        <end position="526"/>
    </location>
</feature>
<feature type="strand" evidence="12">
    <location>
        <begin position="527"/>
        <end position="530"/>
    </location>
</feature>
<feature type="turn" evidence="12">
    <location>
        <begin position="531"/>
        <end position="533"/>
    </location>
</feature>
<feature type="strand" evidence="12">
    <location>
        <begin position="536"/>
        <end position="539"/>
    </location>
</feature>
<feature type="strand" evidence="12">
    <location>
        <begin position="542"/>
        <end position="544"/>
    </location>
</feature>
<feature type="strand" evidence="12">
    <location>
        <begin position="556"/>
        <end position="559"/>
    </location>
</feature>
<feature type="turn" evidence="12">
    <location>
        <begin position="561"/>
        <end position="566"/>
    </location>
</feature>
<feature type="strand" evidence="12">
    <location>
        <begin position="569"/>
        <end position="573"/>
    </location>
</feature>
<feature type="helix" evidence="12">
    <location>
        <begin position="577"/>
        <end position="591"/>
    </location>
</feature>
<feature type="strand" evidence="12">
    <location>
        <begin position="595"/>
        <end position="598"/>
    </location>
</feature>
<feature type="turn" evidence="12">
    <location>
        <begin position="599"/>
        <end position="602"/>
    </location>
</feature>
<feature type="helix" evidence="12">
    <location>
        <begin position="603"/>
        <end position="610"/>
    </location>
</feature>
<feature type="turn" evidence="12">
    <location>
        <begin position="611"/>
        <end position="613"/>
    </location>
</feature>
<feature type="helix" evidence="12">
    <location>
        <begin position="625"/>
        <end position="638"/>
    </location>
</feature>
<feature type="turn" evidence="12">
    <location>
        <begin position="639"/>
        <end position="642"/>
    </location>
</feature>
<feature type="strand" evidence="12">
    <location>
        <begin position="643"/>
        <end position="647"/>
    </location>
</feature>
<feature type="strand" evidence="12">
    <location>
        <begin position="653"/>
        <end position="661"/>
    </location>
</feature>
<feature type="helix" evidence="12">
    <location>
        <begin position="679"/>
        <end position="686"/>
    </location>
</feature>
<keyword id="KW-0002">3D-structure</keyword>
<keyword id="KW-0156">Chromatin regulator</keyword>
<keyword id="KW-0158">Chromosome</keyword>
<keyword id="KW-0217">Developmental protein</keyword>
<keyword id="KW-0479">Metal-binding</keyword>
<keyword id="KW-0539">Nucleus</keyword>
<keyword id="KW-0597">Phosphoprotein</keyword>
<keyword id="KW-1185">Reference proteome</keyword>
<keyword id="KW-0677">Repeat</keyword>
<keyword id="KW-0678">Repressor</keyword>
<keyword id="KW-0804">Transcription</keyword>
<keyword id="KW-0805">Transcription regulation</keyword>
<keyword id="KW-0862">Zinc</keyword>
<keyword id="KW-0863">Zinc-finger</keyword>
<proteinExistence type="evidence at protein level"/>
<organism evidence="10">
    <name type="scientific">Drosophila melanogaster</name>
    <name type="common">Fruit fly</name>
    <dbReference type="NCBI Taxonomy" id="7227"/>
    <lineage>
        <taxon>Eukaryota</taxon>
        <taxon>Metazoa</taxon>
        <taxon>Ecdysozoa</taxon>
        <taxon>Arthropoda</taxon>
        <taxon>Hexapoda</taxon>
        <taxon>Insecta</taxon>
        <taxon>Pterygota</taxon>
        <taxon>Neoptera</taxon>
        <taxon>Endopterygota</taxon>
        <taxon>Diptera</taxon>
        <taxon>Brachycera</taxon>
        <taxon>Muscomorpha</taxon>
        <taxon>Ephydroidea</taxon>
        <taxon>Drosophilidae</taxon>
        <taxon>Drosophila</taxon>
        <taxon>Sophophora</taxon>
    </lineage>
</organism>
<sequence length="1043" mass="114638">MMNNHFHLQHDHPPQNVAHPFMQQPSTAVPSAPPATYGYLAQPAGQQPQWMTTTYQILPPSVGPATVAKRYYATTGPQTTHPTHPSTIQITNSFAQQSTPPKQQAATSCSPFKANNIRIISTAPSVYSLNKPPQEAHSTYAPVQSYYLPSGGGQTAGQINLLAASGTGKQLQPPPLVPVTNSTSPPSTVVLDRINICINNHYTETPTSLSSSLTTAQQPSPIIPAIQHKAILPLIDSSTADSSSCSSSSVSSSSYSGTATTSAAVVIVDEPDSTTTTPQTPPTTPEAMSSPGKSSPSPPLLATQSLLKGVNSMKPSFKTVEAAPPTPPTPPSPPPPPPAPPVAAPSPAVTYALQEDVFIKCNDGRFYLGTIIDQTSDQYLIRFDDQSEQWCEPDKLRKLGGGSSITAGGGGASTTESTNTSPSGPMCVACKRSDIEDVVEICERCGRGYHRGCTVEIVTGSGIWSCKRCAKPMKMQQPVSHKITKPAGICRQLPYHADKLSWDEKHRVNEEQIYCYCGKPGKFDHNMLQCCKCRNWFHTQCMQNFKKKLLRGDMFFVFCCTVCNNGIEFVRRMQIEWVDVLHIALYNLRKHQHQKYHHLLNDIWPFILEQRHQLPICEKWRTLPETALMERLKQTLKDYSDRFVCGREFKRAPAFYALRHSGPPHIPKVFLEPHEELSDELLEKRFKLMLMPEEPDEGANELPKRVPKDVYEFNTDEDDPVETSEDEIPIKQIIEKAKKQAAQKADKHDELPLKPDLADDNANDGDPGKLPAPIPPLLDANSSRKRKAFRLSKRYDNSRNHCDLSSDENSSSSRGTSSLDLIIPPPVNFLGRNNPFLMATPKKASQGRSISVGTGVGVNGIINSIFKLKGTSKEQPRMVRTIKRRLSAKDITIGPNQEVRRRRTRRLTTAIEVISTTTINPIPSHYLPIYAKDLQPPAPPMGKPTHGRLLRQRPQKQSPSQSRRNSTSSTATSSSSNGIGAPGHSMLDLKQSVNKYFGGAMNRIDAGEPFAIRAKRRMGNGQVQYLVEWGGDTATTAIGLLGN</sequence>
<dbReference type="EMBL" id="L35153">
    <property type="protein sequence ID" value="AAA64457.1"/>
    <property type="status" value="ALT_FRAME"/>
    <property type="molecule type" value="mRNA"/>
</dbReference>
<dbReference type="EMBL" id="AE013599">
    <property type="protein sequence ID" value="AAF57748.2"/>
    <property type="molecule type" value="Genomic_DNA"/>
</dbReference>
<dbReference type="EMBL" id="AY075585">
    <property type="protein sequence ID" value="AAL68389.1"/>
    <property type="molecule type" value="mRNA"/>
</dbReference>
<dbReference type="RefSeq" id="NP_001261067.1">
    <property type="nucleotide sequence ID" value="NM_001274138.2"/>
</dbReference>
<dbReference type="RefSeq" id="NP_476672.1">
    <property type="nucleotide sequence ID" value="NM_057324.6"/>
</dbReference>
<dbReference type="PDB" id="2XK0">
    <property type="method" value="NMR"/>
    <property type="chains" value="A=339-404"/>
</dbReference>
<dbReference type="PDB" id="5OQD">
    <property type="method" value="X-ray"/>
    <property type="resolution" value="2.45 A"/>
    <property type="chains" value="A/B/C/D/E/F=491-694"/>
</dbReference>
<dbReference type="PDBsum" id="2XK0"/>
<dbReference type="PDBsum" id="5OQD"/>
<dbReference type="BMRB" id="Q24459"/>
<dbReference type="SMR" id="Q24459"/>
<dbReference type="BioGRID" id="62752">
    <property type="interactions" value="31"/>
</dbReference>
<dbReference type="ComplexPortal" id="CPX-2591">
    <property type="entry name" value="Polycomb repressive complex 2, Pcl variant"/>
</dbReference>
<dbReference type="FunCoup" id="Q24459">
    <property type="interactions" value="1377"/>
</dbReference>
<dbReference type="IntAct" id="Q24459">
    <property type="interactions" value="46"/>
</dbReference>
<dbReference type="MINT" id="Q24459"/>
<dbReference type="STRING" id="7227.FBpp0303033"/>
<dbReference type="GlyGen" id="Q24459">
    <property type="glycosylation" value="2 sites"/>
</dbReference>
<dbReference type="iPTMnet" id="Q24459"/>
<dbReference type="PaxDb" id="7227-FBpp0303033"/>
<dbReference type="DNASU" id="37069"/>
<dbReference type="EnsemblMetazoa" id="FBtr0086735">
    <property type="protein sequence ID" value="FBpp0085914"/>
    <property type="gene ID" value="FBgn0003044"/>
</dbReference>
<dbReference type="EnsemblMetazoa" id="FBtr0329998">
    <property type="protein sequence ID" value="FBpp0303033"/>
    <property type="gene ID" value="FBgn0003044"/>
</dbReference>
<dbReference type="GeneID" id="37069"/>
<dbReference type="KEGG" id="dme:Dmel_CG5109"/>
<dbReference type="UCSC" id="CG5109-RA">
    <property type="organism name" value="d. melanogaster"/>
</dbReference>
<dbReference type="AGR" id="FB:FBgn0003044"/>
<dbReference type="CTD" id="37069"/>
<dbReference type="FlyBase" id="FBgn0003044">
    <property type="gene designation" value="Pcl"/>
</dbReference>
<dbReference type="VEuPathDB" id="VectorBase:FBgn0003044"/>
<dbReference type="eggNOG" id="KOG4323">
    <property type="taxonomic scope" value="Eukaryota"/>
</dbReference>
<dbReference type="GeneTree" id="ENSGT00950000183180"/>
<dbReference type="HOGENOM" id="CLU_292612_0_0_1"/>
<dbReference type="InParanoid" id="Q24459"/>
<dbReference type="OMA" id="MRGTIYQ"/>
<dbReference type="OrthoDB" id="10033786at2759"/>
<dbReference type="PhylomeDB" id="Q24459"/>
<dbReference type="SignaLink" id="Q24459"/>
<dbReference type="CD-CODE" id="58FDC23F">
    <property type="entry name" value="PcG body"/>
</dbReference>
<dbReference type="EvolutionaryTrace" id="Q24459"/>
<dbReference type="GenomeRNAi" id="37069"/>
<dbReference type="PRO" id="PR:Q24459"/>
<dbReference type="Proteomes" id="UP000000803">
    <property type="component" value="Chromosome 2R"/>
</dbReference>
<dbReference type="Bgee" id="FBgn0003044">
    <property type="expression patterns" value="Expressed in spermatogonium in testis and 179 other cell types or tissues"/>
</dbReference>
<dbReference type="ExpressionAtlas" id="Q24459">
    <property type="expression patterns" value="baseline and differential"/>
</dbReference>
<dbReference type="GO" id="GO:0005737">
    <property type="term" value="C:cytoplasm"/>
    <property type="evidence" value="ECO:0000318"/>
    <property type="project" value="GO_Central"/>
</dbReference>
<dbReference type="GO" id="GO:0005634">
    <property type="term" value="C:nucleus"/>
    <property type="evidence" value="ECO:0000314"/>
    <property type="project" value="UniProtKB"/>
</dbReference>
<dbReference type="GO" id="GO:0005700">
    <property type="term" value="C:polytene chromosome"/>
    <property type="evidence" value="ECO:0000314"/>
    <property type="project" value="FlyBase"/>
</dbReference>
<dbReference type="GO" id="GO:0048188">
    <property type="term" value="C:Set1C/COMPASS complex"/>
    <property type="evidence" value="ECO:0007669"/>
    <property type="project" value="InterPro"/>
</dbReference>
<dbReference type="GO" id="GO:0003682">
    <property type="term" value="F:chromatin binding"/>
    <property type="evidence" value="ECO:0000314"/>
    <property type="project" value="FlyBase"/>
</dbReference>
<dbReference type="GO" id="GO:0003677">
    <property type="term" value="F:DNA binding"/>
    <property type="evidence" value="ECO:0000314"/>
    <property type="project" value="UniProtKB"/>
</dbReference>
<dbReference type="GO" id="GO:0003700">
    <property type="term" value="F:DNA-binding transcription factor activity"/>
    <property type="evidence" value="ECO:0000314"/>
    <property type="project" value="UniProtKB"/>
</dbReference>
<dbReference type="GO" id="GO:0140003">
    <property type="term" value="F:histone H3K36me3 reader activity"/>
    <property type="evidence" value="ECO:0000314"/>
    <property type="project" value="UniProtKB"/>
</dbReference>
<dbReference type="GO" id="GO:0140002">
    <property type="term" value="F:histone H3K4me3 reader activity"/>
    <property type="evidence" value="ECO:0000314"/>
    <property type="project" value="UniProtKB"/>
</dbReference>
<dbReference type="GO" id="GO:0008017">
    <property type="term" value="F:microtubule binding"/>
    <property type="evidence" value="ECO:0000318"/>
    <property type="project" value="GO_Central"/>
</dbReference>
<dbReference type="GO" id="GO:0008270">
    <property type="term" value="F:zinc ion binding"/>
    <property type="evidence" value="ECO:0007669"/>
    <property type="project" value="UniProtKB-KW"/>
</dbReference>
<dbReference type="GO" id="GO:0030036">
    <property type="term" value="P:actin cytoskeleton organization"/>
    <property type="evidence" value="ECO:0000318"/>
    <property type="project" value="GO_Central"/>
</dbReference>
<dbReference type="GO" id="GO:0009948">
    <property type="term" value="P:anterior/posterior axis specification"/>
    <property type="evidence" value="ECO:0000315"/>
    <property type="project" value="UniProtKB"/>
</dbReference>
<dbReference type="GO" id="GO:0006325">
    <property type="term" value="P:chromatin organization"/>
    <property type="evidence" value="ECO:0000314"/>
    <property type="project" value="UniProtKB"/>
</dbReference>
<dbReference type="GO" id="GO:0045892">
    <property type="term" value="P:negative regulation of DNA-templated transcription"/>
    <property type="evidence" value="ECO:0000314"/>
    <property type="project" value="UniProtKB"/>
</dbReference>
<dbReference type="GO" id="GO:0010468">
    <property type="term" value="P:regulation of gene expression"/>
    <property type="evidence" value="ECO:0000315"/>
    <property type="project" value="FlyBase"/>
</dbReference>
<dbReference type="GO" id="GO:0006357">
    <property type="term" value="P:regulation of transcription by RNA polymerase II"/>
    <property type="evidence" value="ECO:0000315"/>
    <property type="project" value="UniProtKB"/>
</dbReference>
<dbReference type="GO" id="GO:0007419">
    <property type="term" value="P:ventral cord development"/>
    <property type="evidence" value="ECO:0007001"/>
    <property type="project" value="FlyBase"/>
</dbReference>
<dbReference type="CDD" id="cd15503">
    <property type="entry name" value="PHD2_MTF2_PHF19_like"/>
    <property type="match status" value="1"/>
</dbReference>
<dbReference type="CDD" id="cd20452">
    <property type="entry name" value="Tudor_dPCL-like"/>
    <property type="match status" value="1"/>
</dbReference>
<dbReference type="FunFam" id="3.90.980.20:FF:000009">
    <property type="entry name" value="Polycomblike, isoform B"/>
    <property type="match status" value="1"/>
</dbReference>
<dbReference type="Gene3D" id="2.30.30.140">
    <property type="match status" value="1"/>
</dbReference>
<dbReference type="Gene3D" id="3.90.980.20">
    <property type="match status" value="1"/>
</dbReference>
<dbReference type="Gene3D" id="3.30.40.10">
    <property type="entry name" value="Zinc/RING finger domain, C3HC4 (zinc finger)"/>
    <property type="match status" value="1"/>
</dbReference>
<dbReference type="InterPro" id="IPR025894">
    <property type="entry name" value="Mtf2_C_dom"/>
</dbReference>
<dbReference type="InterPro" id="IPR037869">
    <property type="entry name" value="Spp1/CFP1"/>
</dbReference>
<dbReference type="InterPro" id="IPR002999">
    <property type="entry name" value="Tudor"/>
</dbReference>
<dbReference type="InterPro" id="IPR019786">
    <property type="entry name" value="Zinc_finger_PHD-type_CS"/>
</dbReference>
<dbReference type="InterPro" id="IPR011011">
    <property type="entry name" value="Znf_FYVE_PHD"/>
</dbReference>
<dbReference type="InterPro" id="IPR001965">
    <property type="entry name" value="Znf_PHD"/>
</dbReference>
<dbReference type="InterPro" id="IPR019787">
    <property type="entry name" value="Znf_PHD-finger"/>
</dbReference>
<dbReference type="InterPro" id="IPR013083">
    <property type="entry name" value="Znf_RING/FYVE/PHD"/>
</dbReference>
<dbReference type="PANTHER" id="PTHR46174">
    <property type="entry name" value="CXXC-TYPE ZINC FINGER PROTEIN 1"/>
    <property type="match status" value="1"/>
</dbReference>
<dbReference type="PANTHER" id="PTHR46174:SF1">
    <property type="entry name" value="CXXC-TYPE ZINC FINGER PROTEIN 1"/>
    <property type="match status" value="1"/>
</dbReference>
<dbReference type="Pfam" id="PF14061">
    <property type="entry name" value="Mtf2_C"/>
    <property type="match status" value="1"/>
</dbReference>
<dbReference type="SMART" id="SM00249">
    <property type="entry name" value="PHD"/>
    <property type="match status" value="2"/>
</dbReference>
<dbReference type="SMART" id="SM00333">
    <property type="entry name" value="TUDOR"/>
    <property type="match status" value="1"/>
</dbReference>
<dbReference type="SUPFAM" id="SSF57903">
    <property type="entry name" value="FYVE/PHD zinc finger"/>
    <property type="match status" value="2"/>
</dbReference>
<dbReference type="PROSITE" id="PS01359">
    <property type="entry name" value="ZF_PHD_1"/>
    <property type="match status" value="2"/>
</dbReference>
<dbReference type="PROSITE" id="PS50016">
    <property type="entry name" value="ZF_PHD_2"/>
    <property type="match status" value="1"/>
</dbReference>